<reference key="1">
    <citation type="journal article" date="1989" name="J. Mol. Evol.">
        <title>Evolution of the autosomal chorion cluster in Drosophila. II. Chorion gene expression and sequence comparisons of the s16 and s19 genes in evolutionarily distant species.</title>
        <authorList>
            <person name="Fenerjian M.G."/>
            <person name="Martinez-Cruzado J.C."/>
            <person name="Swimmer C."/>
            <person name="King D."/>
            <person name="Kafatos F.C."/>
        </authorList>
    </citation>
    <scope>NUCLEOTIDE SEQUENCE [GENOMIC DNA]</scope>
    <scope>FUNCTION</scope>
    <scope>SUBCELLULAR LOCATION</scope>
    <scope>VARIANTS HIS-24; TYR-70 AND ALA-71</scope>
</reference>
<reference key="2">
    <citation type="journal article" date="2005" name="Mol. Biol. Evol.">
        <title>Rapidly evolving genes of Drosophila: differing levels of selective pressure in testis, ovary, and head tissues between sibling species.</title>
        <authorList>
            <person name="Jagadeeshan S."/>
            <person name="Singh R.S."/>
        </authorList>
    </citation>
    <scope>NUCLEOTIDE SEQUENCE [GENOMIC DNA]</scope>
    <source>
        <tissue>Ovary</tissue>
    </source>
</reference>
<reference key="3">
    <citation type="journal article" date="2007" name="Mol. Biol. Evol.">
        <title>Rapid evolution of outer egg membrane proteins in the Drosophila melanogaster subgroup: a case of ecologically driven evolution of female reproductive traits.</title>
        <authorList>
            <person name="Jagadeeshan S."/>
            <person name="Singh R.S."/>
        </authorList>
    </citation>
    <scope>NUCLEOTIDE SEQUENCE [GENOMIC DNA]</scope>
    <scope>VARIANTS HIS-24; TYR-70 AND ALA-71</scope>
    <source>
        <strain>0231.01</strain>
        <strain>Kronenbourg</strain>
        <strain>Madibou4</strain>
        <strain>Primus20</strain>
        <strain>Primus25</strain>
        <strain>ZH34</strain>
        <strain>ZH83</strain>
    </source>
</reference>
<reference key="4">
    <citation type="journal article" date="2000" name="Science">
        <title>The genome sequence of Drosophila melanogaster.</title>
        <authorList>
            <person name="Adams M.D."/>
            <person name="Celniker S.E."/>
            <person name="Holt R.A."/>
            <person name="Evans C.A."/>
            <person name="Gocayne J.D."/>
            <person name="Amanatides P.G."/>
            <person name="Scherer S.E."/>
            <person name="Li P.W."/>
            <person name="Hoskins R.A."/>
            <person name="Galle R.F."/>
            <person name="George R.A."/>
            <person name="Lewis S.E."/>
            <person name="Richards S."/>
            <person name="Ashburner M."/>
            <person name="Henderson S.N."/>
            <person name="Sutton G.G."/>
            <person name="Wortman J.R."/>
            <person name="Yandell M.D."/>
            <person name="Zhang Q."/>
            <person name="Chen L.X."/>
            <person name="Brandon R.C."/>
            <person name="Rogers Y.-H.C."/>
            <person name="Blazej R.G."/>
            <person name="Champe M."/>
            <person name="Pfeiffer B.D."/>
            <person name="Wan K.H."/>
            <person name="Doyle C."/>
            <person name="Baxter E.G."/>
            <person name="Helt G."/>
            <person name="Nelson C.R."/>
            <person name="Miklos G.L.G."/>
            <person name="Abril J.F."/>
            <person name="Agbayani A."/>
            <person name="An H.-J."/>
            <person name="Andrews-Pfannkoch C."/>
            <person name="Baldwin D."/>
            <person name="Ballew R.M."/>
            <person name="Basu A."/>
            <person name="Baxendale J."/>
            <person name="Bayraktaroglu L."/>
            <person name="Beasley E.M."/>
            <person name="Beeson K.Y."/>
            <person name="Benos P.V."/>
            <person name="Berman B.P."/>
            <person name="Bhandari D."/>
            <person name="Bolshakov S."/>
            <person name="Borkova D."/>
            <person name="Botchan M.R."/>
            <person name="Bouck J."/>
            <person name="Brokstein P."/>
            <person name="Brottier P."/>
            <person name="Burtis K.C."/>
            <person name="Busam D.A."/>
            <person name="Butler H."/>
            <person name="Cadieu E."/>
            <person name="Center A."/>
            <person name="Chandra I."/>
            <person name="Cherry J.M."/>
            <person name="Cawley S."/>
            <person name="Dahlke C."/>
            <person name="Davenport L.B."/>
            <person name="Davies P."/>
            <person name="de Pablos B."/>
            <person name="Delcher A."/>
            <person name="Deng Z."/>
            <person name="Mays A.D."/>
            <person name="Dew I."/>
            <person name="Dietz S.M."/>
            <person name="Dodson K."/>
            <person name="Doup L.E."/>
            <person name="Downes M."/>
            <person name="Dugan-Rocha S."/>
            <person name="Dunkov B.C."/>
            <person name="Dunn P."/>
            <person name="Durbin K.J."/>
            <person name="Evangelista C.C."/>
            <person name="Ferraz C."/>
            <person name="Ferriera S."/>
            <person name="Fleischmann W."/>
            <person name="Fosler C."/>
            <person name="Gabrielian A.E."/>
            <person name="Garg N.S."/>
            <person name="Gelbart W.M."/>
            <person name="Glasser K."/>
            <person name="Glodek A."/>
            <person name="Gong F."/>
            <person name="Gorrell J.H."/>
            <person name="Gu Z."/>
            <person name="Guan P."/>
            <person name="Harris M."/>
            <person name="Harris N.L."/>
            <person name="Harvey D.A."/>
            <person name="Heiman T.J."/>
            <person name="Hernandez J.R."/>
            <person name="Houck J."/>
            <person name="Hostin D."/>
            <person name="Houston K.A."/>
            <person name="Howland T.J."/>
            <person name="Wei M.-H."/>
            <person name="Ibegwam C."/>
            <person name="Jalali M."/>
            <person name="Kalush F."/>
            <person name="Karpen G.H."/>
            <person name="Ke Z."/>
            <person name="Kennison J.A."/>
            <person name="Ketchum K.A."/>
            <person name="Kimmel B.E."/>
            <person name="Kodira C.D."/>
            <person name="Kraft C.L."/>
            <person name="Kravitz S."/>
            <person name="Kulp D."/>
            <person name="Lai Z."/>
            <person name="Lasko P."/>
            <person name="Lei Y."/>
            <person name="Levitsky A.A."/>
            <person name="Li J.H."/>
            <person name="Li Z."/>
            <person name="Liang Y."/>
            <person name="Lin X."/>
            <person name="Liu X."/>
            <person name="Mattei B."/>
            <person name="McIntosh T.C."/>
            <person name="McLeod M.P."/>
            <person name="McPherson D."/>
            <person name="Merkulov G."/>
            <person name="Milshina N.V."/>
            <person name="Mobarry C."/>
            <person name="Morris J."/>
            <person name="Moshrefi A."/>
            <person name="Mount S.M."/>
            <person name="Moy M."/>
            <person name="Murphy B."/>
            <person name="Murphy L."/>
            <person name="Muzny D.M."/>
            <person name="Nelson D.L."/>
            <person name="Nelson D.R."/>
            <person name="Nelson K.A."/>
            <person name="Nixon K."/>
            <person name="Nusskern D.R."/>
            <person name="Pacleb J.M."/>
            <person name="Palazzolo M."/>
            <person name="Pittman G.S."/>
            <person name="Pan S."/>
            <person name="Pollard J."/>
            <person name="Puri V."/>
            <person name="Reese M.G."/>
            <person name="Reinert K."/>
            <person name="Remington K."/>
            <person name="Saunders R.D.C."/>
            <person name="Scheeler F."/>
            <person name="Shen H."/>
            <person name="Shue B.C."/>
            <person name="Siden-Kiamos I."/>
            <person name="Simpson M."/>
            <person name="Skupski M.P."/>
            <person name="Smith T.J."/>
            <person name="Spier E."/>
            <person name="Spradling A.C."/>
            <person name="Stapleton M."/>
            <person name="Strong R."/>
            <person name="Sun E."/>
            <person name="Svirskas R."/>
            <person name="Tector C."/>
            <person name="Turner R."/>
            <person name="Venter E."/>
            <person name="Wang A.H."/>
            <person name="Wang X."/>
            <person name="Wang Z.-Y."/>
            <person name="Wassarman D.A."/>
            <person name="Weinstock G.M."/>
            <person name="Weissenbach J."/>
            <person name="Williams S.M."/>
            <person name="Woodage T."/>
            <person name="Worley K.C."/>
            <person name="Wu D."/>
            <person name="Yang S."/>
            <person name="Yao Q.A."/>
            <person name="Ye J."/>
            <person name="Yeh R.-F."/>
            <person name="Zaveri J.S."/>
            <person name="Zhan M."/>
            <person name="Zhang G."/>
            <person name="Zhao Q."/>
            <person name="Zheng L."/>
            <person name="Zheng X.H."/>
            <person name="Zhong F.N."/>
            <person name="Zhong W."/>
            <person name="Zhou X."/>
            <person name="Zhu S.C."/>
            <person name="Zhu X."/>
            <person name="Smith H.O."/>
            <person name="Gibbs R.A."/>
            <person name="Myers E.W."/>
            <person name="Rubin G.M."/>
            <person name="Venter J.C."/>
        </authorList>
    </citation>
    <scope>NUCLEOTIDE SEQUENCE [LARGE SCALE GENOMIC DNA]</scope>
    <source>
        <strain>Berkeley</strain>
    </source>
</reference>
<reference key="5">
    <citation type="journal article" date="2002" name="Genome Biol.">
        <title>Annotation of the Drosophila melanogaster euchromatic genome: a systematic review.</title>
        <authorList>
            <person name="Misra S."/>
            <person name="Crosby M.A."/>
            <person name="Mungall C.J."/>
            <person name="Matthews B.B."/>
            <person name="Campbell K.S."/>
            <person name="Hradecky P."/>
            <person name="Huang Y."/>
            <person name="Kaminker J.S."/>
            <person name="Millburn G.H."/>
            <person name="Prochnik S.E."/>
            <person name="Smith C.D."/>
            <person name="Tupy J.L."/>
            <person name="Whitfield E.J."/>
            <person name="Bayraktaroglu L."/>
            <person name="Berman B.P."/>
            <person name="Bettencourt B.R."/>
            <person name="Celniker S.E."/>
            <person name="de Grey A.D.N.J."/>
            <person name="Drysdale R.A."/>
            <person name="Harris N.L."/>
            <person name="Richter J."/>
            <person name="Russo S."/>
            <person name="Schroeder A.J."/>
            <person name="Shu S.Q."/>
            <person name="Stapleton M."/>
            <person name="Yamada C."/>
            <person name="Ashburner M."/>
            <person name="Gelbart W.M."/>
            <person name="Rubin G.M."/>
            <person name="Lewis S.E."/>
        </authorList>
    </citation>
    <scope>GENOME REANNOTATION</scope>
    <source>
        <strain>Berkeley</strain>
    </source>
</reference>
<reference key="6">
    <citation type="submission" date="2007-10" db="EMBL/GenBank/DDBJ databases">
        <authorList>
            <person name="Stapleton M."/>
            <person name="Carlson J.W."/>
            <person name="Frise E."/>
            <person name="Kapadia B."/>
            <person name="Park S."/>
            <person name="Wan K.H."/>
            <person name="Yu C."/>
            <person name="Celniker S.E."/>
        </authorList>
    </citation>
    <scope>NUCLEOTIDE SEQUENCE [LARGE SCALE MRNA]</scope>
    <source>
        <strain>Berkeley</strain>
    </source>
</reference>
<protein>
    <recommendedName>
        <fullName>Chorion protein S16</fullName>
    </recommendedName>
</protein>
<comment type="function">
    <text evidence="3">Chorion membrane (egg shell) protein; plays a role in protecting the egg from the environment.</text>
</comment>
<comment type="subcellular location">
    <subcellularLocation>
        <location evidence="3">Secreted</location>
    </subcellularLocation>
</comment>
<comment type="similarity">
    <text evidence="4">Belongs to the chorion protein S16 family.</text>
</comment>
<name>CH16_DROME</name>
<sequence>MSATLRLLCLMACCVALAVANRPNYGGSGYGASYGDVVKAAETAEAQASALTNAAGAAASAAKLDGADWNSLNRYGWEQGRPLLAKPYGPLDPLYAAALPPRSFVAEVDPVFKKSQYGGSYGENAYLKTDAKLGVVAI</sequence>
<organism>
    <name type="scientific">Drosophila melanogaster</name>
    <name type="common">Fruit fly</name>
    <dbReference type="NCBI Taxonomy" id="7227"/>
    <lineage>
        <taxon>Eukaryota</taxon>
        <taxon>Metazoa</taxon>
        <taxon>Ecdysozoa</taxon>
        <taxon>Arthropoda</taxon>
        <taxon>Hexapoda</taxon>
        <taxon>Insecta</taxon>
        <taxon>Pterygota</taxon>
        <taxon>Neoptera</taxon>
        <taxon>Endopterygota</taxon>
        <taxon>Diptera</taxon>
        <taxon>Brachycera</taxon>
        <taxon>Muscomorpha</taxon>
        <taxon>Ephydroidea</taxon>
        <taxon>Drosophilidae</taxon>
        <taxon>Drosophila</taxon>
        <taxon>Sophophora</taxon>
    </lineage>
</organism>
<keyword id="KW-1185">Reference proteome</keyword>
<keyword id="KW-0964">Secreted</keyword>
<keyword id="KW-0732">Signal</keyword>
<feature type="signal peptide" evidence="1">
    <location>
        <begin position="1"/>
        <end position="20"/>
    </location>
</feature>
<feature type="chain" id="PRO_0000089617" description="Chorion protein S16">
    <location>
        <begin position="21"/>
        <end position="138"/>
    </location>
</feature>
<feature type="sequence variant" description="In strain: Kronenbourg, Madibou4, Primus20, Primus25, ZH34 and ZH83." evidence="2 3">
    <original>N</original>
    <variation>H</variation>
    <location>
        <position position="24"/>
    </location>
</feature>
<feature type="sequence variant" description="In strain: Kronenbourg, Madibou4, Primus20, Primus25, ZH34 and ZH83." evidence="2 3">
    <original>N</original>
    <variation>Y</variation>
    <location>
        <position position="70"/>
    </location>
</feature>
<feature type="sequence variant" description="In strain: Kronenbourg, Madibou4, Primus20, Primus25, ZH34 and ZH83." evidence="2 3">
    <original>S</original>
    <variation>A</variation>
    <location>
        <position position="71"/>
    </location>
</feature>
<feature type="sequence conflict" description="In Ref. 6; ABV82254." evidence="4" ref="6">
    <location>
        <position position="35"/>
    </location>
</feature>
<feature type="sequence conflict" description="In Ref. 6; ABV82269." evidence="4" ref="6">
    <original>A</original>
    <variation>V</variation>
    <location>
        <position position="85"/>
    </location>
</feature>
<dbReference type="EMBL" id="X16715">
    <property type="protein sequence ID" value="CAA34686.1"/>
    <property type="molecule type" value="Genomic_DNA"/>
</dbReference>
<dbReference type="EMBL" id="DQ062774">
    <property type="protein sequence ID" value="AAY56647.1"/>
    <property type="molecule type" value="mRNA"/>
</dbReference>
<dbReference type="EMBL" id="EF441633">
    <property type="protein sequence ID" value="ABO71674.1"/>
    <property type="molecule type" value="Genomic_DNA"/>
</dbReference>
<dbReference type="EMBL" id="EF441696">
    <property type="protein sequence ID" value="ABO71737.1"/>
    <property type="molecule type" value="Genomic_DNA"/>
</dbReference>
<dbReference type="EMBL" id="EF441697">
    <property type="protein sequence ID" value="ABO71738.1"/>
    <property type="molecule type" value="Genomic_DNA"/>
</dbReference>
<dbReference type="EMBL" id="EF441698">
    <property type="protein sequence ID" value="ABO71739.1"/>
    <property type="molecule type" value="Genomic_DNA"/>
</dbReference>
<dbReference type="EMBL" id="EF441699">
    <property type="protein sequence ID" value="ABO71740.1"/>
    <property type="molecule type" value="Genomic_DNA"/>
</dbReference>
<dbReference type="EMBL" id="EF441700">
    <property type="protein sequence ID" value="ABO71741.1"/>
    <property type="molecule type" value="Genomic_DNA"/>
</dbReference>
<dbReference type="EMBL" id="EF441701">
    <property type="protein sequence ID" value="ABO71742.1"/>
    <property type="molecule type" value="Genomic_DNA"/>
</dbReference>
<dbReference type="EMBL" id="EF441702">
    <property type="protein sequence ID" value="ABO71743.1"/>
    <property type="molecule type" value="Genomic_DNA"/>
</dbReference>
<dbReference type="EMBL" id="AE014296">
    <property type="protein sequence ID" value="AAF50372.1"/>
    <property type="molecule type" value="Genomic_DNA"/>
</dbReference>
<dbReference type="EMBL" id="BT030865">
    <property type="protein sequence ID" value="ABV82247.1"/>
    <property type="molecule type" value="mRNA"/>
</dbReference>
<dbReference type="EMBL" id="BT030872">
    <property type="protein sequence ID" value="ABV82254.1"/>
    <property type="molecule type" value="mRNA"/>
</dbReference>
<dbReference type="EMBL" id="BT030887">
    <property type="protein sequence ID" value="ABV82269.1"/>
    <property type="molecule type" value="mRNA"/>
</dbReference>
<dbReference type="EMBL" id="BT030893">
    <property type="protein sequence ID" value="ABV82275.1"/>
    <property type="molecule type" value="mRNA"/>
</dbReference>
<dbReference type="PIR" id="A32998">
    <property type="entry name" value="A32998"/>
</dbReference>
<dbReference type="RefSeq" id="NP_523981.1">
    <property type="nucleotide sequence ID" value="NM_079257.3"/>
</dbReference>
<dbReference type="BioGRID" id="64407">
    <property type="interactions" value="4"/>
</dbReference>
<dbReference type="FunCoup" id="P22977">
    <property type="interactions" value="4"/>
</dbReference>
<dbReference type="IntAct" id="P22977">
    <property type="interactions" value="2"/>
</dbReference>
<dbReference type="STRING" id="7227.FBpp0076301"/>
<dbReference type="PaxDb" id="7227-FBpp0076301"/>
<dbReference type="DNASU" id="39001"/>
<dbReference type="EnsemblMetazoa" id="FBtr0076574">
    <property type="protein sequence ID" value="FBpp0076301"/>
    <property type="gene ID" value="FBgn0000356"/>
</dbReference>
<dbReference type="GeneID" id="39001"/>
<dbReference type="KEGG" id="dme:Dmel_CG6533"/>
<dbReference type="AGR" id="FB:FBgn0000356"/>
<dbReference type="CTD" id="39001"/>
<dbReference type="FlyBase" id="FBgn0000356">
    <property type="gene designation" value="Cp16"/>
</dbReference>
<dbReference type="VEuPathDB" id="VectorBase:FBgn0000356"/>
<dbReference type="eggNOG" id="ENOG502T818">
    <property type="taxonomic scope" value="Eukaryota"/>
</dbReference>
<dbReference type="HOGENOM" id="CLU_153425_0_0_1"/>
<dbReference type="InParanoid" id="P22977"/>
<dbReference type="OMA" id="NRYGWEQ"/>
<dbReference type="OrthoDB" id="8027300at2759"/>
<dbReference type="PhylomeDB" id="P22977"/>
<dbReference type="BioGRID-ORCS" id="39001">
    <property type="hits" value="0 hits in 1 CRISPR screen"/>
</dbReference>
<dbReference type="ChiTaRS" id="Cp16">
    <property type="organism name" value="fly"/>
</dbReference>
<dbReference type="GenomeRNAi" id="39001"/>
<dbReference type="PRO" id="PR:P22977"/>
<dbReference type="Proteomes" id="UP000000803">
    <property type="component" value="Chromosome 3L"/>
</dbReference>
<dbReference type="Bgee" id="FBgn0000356">
    <property type="expression patterns" value="Expressed in dorsal appendage forming follicle cell in ovary and 28 other cell types or tissues"/>
</dbReference>
<dbReference type="ExpressionAtlas" id="P22977">
    <property type="expression patterns" value="baseline and differential"/>
</dbReference>
<dbReference type="GO" id="GO:0042600">
    <property type="term" value="C:egg chorion"/>
    <property type="evidence" value="ECO:0000305"/>
    <property type="project" value="FlyBase"/>
</dbReference>
<dbReference type="GO" id="GO:0005576">
    <property type="term" value="C:extracellular region"/>
    <property type="evidence" value="ECO:0007669"/>
    <property type="project" value="UniProtKB-SubCell"/>
</dbReference>
<dbReference type="GO" id="GO:0005213">
    <property type="term" value="F:structural constituent of egg chorion"/>
    <property type="evidence" value="ECO:0000305"/>
    <property type="project" value="FlyBase"/>
</dbReference>
<dbReference type="GO" id="GO:0007304">
    <property type="term" value="P:chorion-containing eggshell formation"/>
    <property type="evidence" value="ECO:0000270"/>
    <property type="project" value="FlyBase"/>
</dbReference>
<dbReference type="GO" id="GO:0046843">
    <property type="term" value="P:dorsal appendage formation"/>
    <property type="evidence" value="ECO:0000315"/>
    <property type="project" value="FlyBase"/>
</dbReference>
<dbReference type="InterPro" id="IPR008450">
    <property type="entry name" value="Chorion_S16"/>
</dbReference>
<dbReference type="Pfam" id="PF05836">
    <property type="entry name" value="Chorion_S16"/>
    <property type="match status" value="1"/>
</dbReference>
<gene>
    <name type="primary">Cp16</name>
    <name type="synonym">s16</name>
    <name type="ORF">CG6533</name>
</gene>
<accession>P22977</accession>
<accession>A4UM28</accession>
<accession>A8E6S3</accession>
<accession>A8E6T0</accession>
<accession>A8E6U5</accession>
<accession>Q3YMV2</accession>
<accession>Q9VSP4</accession>
<proteinExistence type="evidence at transcript level"/>
<evidence type="ECO:0000255" key="1"/>
<evidence type="ECO:0000269" key="2">
    <source>
    </source>
</evidence>
<evidence type="ECO:0000269" key="3">
    <source>
    </source>
</evidence>
<evidence type="ECO:0000305" key="4"/>